<reference key="1">
    <citation type="submission" date="2007-05" db="EMBL/GenBank/DDBJ databases">
        <title>Complete sequence of Thermotoga petrophila RKU-1.</title>
        <authorList>
            <consortium name="US DOE Joint Genome Institute"/>
            <person name="Copeland A."/>
            <person name="Lucas S."/>
            <person name="Lapidus A."/>
            <person name="Barry K."/>
            <person name="Glavina del Rio T."/>
            <person name="Dalin E."/>
            <person name="Tice H."/>
            <person name="Pitluck S."/>
            <person name="Sims D."/>
            <person name="Brettin T."/>
            <person name="Bruce D."/>
            <person name="Detter J.C."/>
            <person name="Han C."/>
            <person name="Tapia R."/>
            <person name="Schmutz J."/>
            <person name="Larimer F."/>
            <person name="Land M."/>
            <person name="Hauser L."/>
            <person name="Kyrpides N."/>
            <person name="Mikhailova N."/>
            <person name="Nelson K."/>
            <person name="Gogarten J.P."/>
            <person name="Noll K."/>
            <person name="Richardson P."/>
        </authorList>
    </citation>
    <scope>NUCLEOTIDE SEQUENCE [LARGE SCALE GENOMIC DNA]</scope>
    <source>
        <strain>ATCC BAA-488 / DSM 13995 / JCM 10881 / RKU-1</strain>
    </source>
</reference>
<gene>
    <name evidence="1" type="primary">pdxT</name>
    <name type="ordered locus">Tpet_0448</name>
</gene>
<organism>
    <name type="scientific">Thermotoga petrophila (strain ATCC BAA-488 / DSM 13995 / JCM 10881 / RKU-1)</name>
    <dbReference type="NCBI Taxonomy" id="390874"/>
    <lineage>
        <taxon>Bacteria</taxon>
        <taxon>Thermotogati</taxon>
        <taxon>Thermotogota</taxon>
        <taxon>Thermotogae</taxon>
        <taxon>Thermotogales</taxon>
        <taxon>Thermotogaceae</taxon>
        <taxon>Thermotoga</taxon>
    </lineage>
</organism>
<accession>A5IJU9</accession>
<feature type="chain" id="PRO_1000069471" description="Pyridoxal 5'-phosphate synthase subunit PdxT">
    <location>
        <begin position="1"/>
        <end position="188"/>
    </location>
</feature>
<feature type="active site" description="Nucleophile" evidence="1">
    <location>
        <position position="78"/>
    </location>
</feature>
<feature type="active site" description="Charge relay system" evidence="1">
    <location>
        <position position="170"/>
    </location>
</feature>
<feature type="active site" description="Charge relay system" evidence="1">
    <location>
        <position position="172"/>
    </location>
</feature>
<feature type="binding site" evidence="1">
    <location>
        <begin position="46"/>
        <end position="48"/>
    </location>
    <ligand>
        <name>L-glutamine</name>
        <dbReference type="ChEBI" id="CHEBI:58359"/>
    </ligand>
</feature>
<feature type="binding site" evidence="1">
    <location>
        <position position="105"/>
    </location>
    <ligand>
        <name>L-glutamine</name>
        <dbReference type="ChEBI" id="CHEBI:58359"/>
    </ligand>
</feature>
<feature type="binding site" evidence="1">
    <location>
        <begin position="134"/>
        <end position="135"/>
    </location>
    <ligand>
        <name>L-glutamine</name>
        <dbReference type="ChEBI" id="CHEBI:58359"/>
    </ligand>
</feature>
<name>PDXT_THEP1</name>
<keyword id="KW-0315">Glutamine amidotransferase</keyword>
<keyword id="KW-0378">Hydrolase</keyword>
<keyword id="KW-0456">Lyase</keyword>
<keyword id="KW-0663">Pyridoxal phosphate</keyword>
<proteinExistence type="inferred from homology"/>
<dbReference type="EC" id="4.3.3.6" evidence="1"/>
<dbReference type="EC" id="3.5.1.2" evidence="1"/>
<dbReference type="EMBL" id="CP000702">
    <property type="protein sequence ID" value="ABQ46472.1"/>
    <property type="molecule type" value="Genomic_DNA"/>
</dbReference>
<dbReference type="RefSeq" id="WP_011943090.1">
    <property type="nucleotide sequence ID" value="NC_009486.1"/>
</dbReference>
<dbReference type="SMR" id="A5IJU9"/>
<dbReference type="STRING" id="390874.Tpet_0448"/>
<dbReference type="KEGG" id="tpt:Tpet_0448"/>
<dbReference type="eggNOG" id="COG0311">
    <property type="taxonomic scope" value="Bacteria"/>
</dbReference>
<dbReference type="HOGENOM" id="CLU_069674_2_0_0"/>
<dbReference type="UniPathway" id="UPA00245"/>
<dbReference type="Proteomes" id="UP000006558">
    <property type="component" value="Chromosome"/>
</dbReference>
<dbReference type="GO" id="GO:0005829">
    <property type="term" value="C:cytosol"/>
    <property type="evidence" value="ECO:0007669"/>
    <property type="project" value="TreeGrafter"/>
</dbReference>
<dbReference type="GO" id="GO:1903600">
    <property type="term" value="C:glutaminase complex"/>
    <property type="evidence" value="ECO:0007669"/>
    <property type="project" value="TreeGrafter"/>
</dbReference>
<dbReference type="GO" id="GO:0004359">
    <property type="term" value="F:glutaminase activity"/>
    <property type="evidence" value="ECO:0007669"/>
    <property type="project" value="UniProtKB-UniRule"/>
</dbReference>
<dbReference type="GO" id="GO:0036381">
    <property type="term" value="F:pyridoxal 5'-phosphate synthase (glutamine hydrolysing) activity"/>
    <property type="evidence" value="ECO:0007669"/>
    <property type="project" value="UniProtKB-UniRule"/>
</dbReference>
<dbReference type="GO" id="GO:0006543">
    <property type="term" value="P:glutamine catabolic process"/>
    <property type="evidence" value="ECO:0007669"/>
    <property type="project" value="UniProtKB-UniRule"/>
</dbReference>
<dbReference type="GO" id="GO:0042823">
    <property type="term" value="P:pyridoxal phosphate biosynthetic process"/>
    <property type="evidence" value="ECO:0007669"/>
    <property type="project" value="UniProtKB-UniRule"/>
</dbReference>
<dbReference type="GO" id="GO:0008614">
    <property type="term" value="P:pyridoxine metabolic process"/>
    <property type="evidence" value="ECO:0007669"/>
    <property type="project" value="TreeGrafter"/>
</dbReference>
<dbReference type="CDD" id="cd01749">
    <property type="entry name" value="GATase1_PB"/>
    <property type="match status" value="1"/>
</dbReference>
<dbReference type="FunFam" id="3.40.50.880:FF:000041">
    <property type="entry name" value="Glutamine amidotransferase subunit pdxT, putative"/>
    <property type="match status" value="1"/>
</dbReference>
<dbReference type="Gene3D" id="3.40.50.880">
    <property type="match status" value="1"/>
</dbReference>
<dbReference type="HAMAP" id="MF_01615">
    <property type="entry name" value="PdxT"/>
    <property type="match status" value="1"/>
</dbReference>
<dbReference type="InterPro" id="IPR029062">
    <property type="entry name" value="Class_I_gatase-like"/>
</dbReference>
<dbReference type="InterPro" id="IPR002161">
    <property type="entry name" value="PdxT/SNO"/>
</dbReference>
<dbReference type="InterPro" id="IPR021196">
    <property type="entry name" value="PdxT/SNO_CS"/>
</dbReference>
<dbReference type="NCBIfam" id="TIGR03800">
    <property type="entry name" value="PLP_synth_Pdx2"/>
    <property type="match status" value="1"/>
</dbReference>
<dbReference type="PANTHER" id="PTHR31559">
    <property type="entry name" value="PYRIDOXAL 5'-PHOSPHATE SYNTHASE SUBUNIT SNO"/>
    <property type="match status" value="1"/>
</dbReference>
<dbReference type="PANTHER" id="PTHR31559:SF0">
    <property type="entry name" value="PYRIDOXAL 5'-PHOSPHATE SYNTHASE SUBUNIT SNO1-RELATED"/>
    <property type="match status" value="1"/>
</dbReference>
<dbReference type="Pfam" id="PF01174">
    <property type="entry name" value="SNO"/>
    <property type="match status" value="1"/>
</dbReference>
<dbReference type="PIRSF" id="PIRSF005639">
    <property type="entry name" value="Glut_amidoT_SNO"/>
    <property type="match status" value="1"/>
</dbReference>
<dbReference type="SUPFAM" id="SSF52317">
    <property type="entry name" value="Class I glutamine amidotransferase-like"/>
    <property type="match status" value="1"/>
</dbReference>
<dbReference type="PROSITE" id="PS01236">
    <property type="entry name" value="PDXT_SNO_1"/>
    <property type="match status" value="1"/>
</dbReference>
<dbReference type="PROSITE" id="PS51130">
    <property type="entry name" value="PDXT_SNO_2"/>
    <property type="match status" value="1"/>
</dbReference>
<sequence>MKIGVLGVQGDVREHVEALHKLGVETLIVKLPEQLDMVDGLILPGGESTTMIRILKEMDMDEKLVERINEGLPVFATCAGVILLAKRIENYSQEKLGVLDITVERNAYGRQVESFETFVEIPAVGKDPFRAIFIRAPKIVETGKNVEILATYDYDPVLVKEGNILACTFHPELTDDLRLHRYFLEMVK</sequence>
<protein>
    <recommendedName>
        <fullName evidence="1">Pyridoxal 5'-phosphate synthase subunit PdxT</fullName>
        <ecNumber evidence="1">4.3.3.6</ecNumber>
    </recommendedName>
    <alternativeName>
        <fullName evidence="1">Pdx2</fullName>
    </alternativeName>
    <alternativeName>
        <fullName evidence="1">Pyridoxal 5'-phosphate synthase glutaminase subunit</fullName>
        <ecNumber evidence="1">3.5.1.2</ecNumber>
    </alternativeName>
</protein>
<comment type="function">
    <text evidence="1">Catalyzes the hydrolysis of glutamine to glutamate and ammonia as part of the biosynthesis of pyridoxal 5'-phosphate. The resulting ammonia molecule is channeled to the active site of PdxS.</text>
</comment>
<comment type="catalytic activity">
    <reaction evidence="1">
        <text>aldehydo-D-ribose 5-phosphate + D-glyceraldehyde 3-phosphate + L-glutamine = pyridoxal 5'-phosphate + L-glutamate + phosphate + 3 H2O + H(+)</text>
        <dbReference type="Rhea" id="RHEA:31507"/>
        <dbReference type="ChEBI" id="CHEBI:15377"/>
        <dbReference type="ChEBI" id="CHEBI:15378"/>
        <dbReference type="ChEBI" id="CHEBI:29985"/>
        <dbReference type="ChEBI" id="CHEBI:43474"/>
        <dbReference type="ChEBI" id="CHEBI:58273"/>
        <dbReference type="ChEBI" id="CHEBI:58359"/>
        <dbReference type="ChEBI" id="CHEBI:59776"/>
        <dbReference type="ChEBI" id="CHEBI:597326"/>
        <dbReference type="EC" id="4.3.3.6"/>
    </reaction>
</comment>
<comment type="catalytic activity">
    <reaction evidence="1">
        <text>L-glutamine + H2O = L-glutamate + NH4(+)</text>
        <dbReference type="Rhea" id="RHEA:15889"/>
        <dbReference type="ChEBI" id="CHEBI:15377"/>
        <dbReference type="ChEBI" id="CHEBI:28938"/>
        <dbReference type="ChEBI" id="CHEBI:29985"/>
        <dbReference type="ChEBI" id="CHEBI:58359"/>
        <dbReference type="EC" id="3.5.1.2"/>
    </reaction>
</comment>
<comment type="pathway">
    <text evidence="1">Cofactor biosynthesis; pyridoxal 5'-phosphate biosynthesis.</text>
</comment>
<comment type="subunit">
    <text evidence="1">In the presence of PdxS, forms a dodecamer of heterodimers. Only shows activity in the heterodimer.</text>
</comment>
<comment type="similarity">
    <text evidence="1">Belongs to the glutaminase PdxT/SNO family.</text>
</comment>
<evidence type="ECO:0000255" key="1">
    <source>
        <dbReference type="HAMAP-Rule" id="MF_01615"/>
    </source>
</evidence>